<keyword id="KW-0067">ATP-binding</keyword>
<keyword id="KW-0347">Helicase</keyword>
<keyword id="KW-0378">Hydrolase</keyword>
<keyword id="KW-0547">Nucleotide-binding</keyword>
<keyword id="KW-0539">Nucleus</keyword>
<keyword id="KW-0690">Ribosome biogenesis</keyword>
<keyword id="KW-0694">RNA-binding</keyword>
<keyword id="KW-0698">rRNA processing</keyword>
<reference key="1">
    <citation type="journal article" date="2007" name="Plant Cell">
        <title>Dothideomycete-plant interactions illuminated by genome sequencing and EST analysis of the wheat pathogen Stagonospora nodorum.</title>
        <authorList>
            <person name="Hane J.K."/>
            <person name="Lowe R.G.T."/>
            <person name="Solomon P.S."/>
            <person name="Tan K.-C."/>
            <person name="Schoch C.L."/>
            <person name="Spatafora J.W."/>
            <person name="Crous P.W."/>
            <person name="Kodira C.D."/>
            <person name="Birren B.W."/>
            <person name="Galagan J.E."/>
            <person name="Torriani S.F.F."/>
            <person name="McDonald B.A."/>
            <person name="Oliver R.P."/>
        </authorList>
    </citation>
    <scope>NUCLEOTIDE SEQUENCE [LARGE SCALE GENOMIC DNA]</scope>
    <source>
        <strain>SN15 / ATCC MYA-4574 / FGSC 10173</strain>
    </source>
</reference>
<gene>
    <name type="primary">DBP3</name>
    <name type="ORF">SNOG_03302</name>
</gene>
<evidence type="ECO:0000250" key="1"/>
<evidence type="ECO:0000255" key="2">
    <source>
        <dbReference type="PROSITE-ProRule" id="PRU00541"/>
    </source>
</evidence>
<evidence type="ECO:0000255" key="3">
    <source>
        <dbReference type="PROSITE-ProRule" id="PRU00542"/>
    </source>
</evidence>
<evidence type="ECO:0000256" key="4">
    <source>
        <dbReference type="SAM" id="MobiDB-lite"/>
    </source>
</evidence>
<evidence type="ECO:0000305" key="5"/>
<name>DBP3_PHANO</name>
<dbReference type="EC" id="3.6.4.13"/>
<dbReference type="EMBL" id="CH445328">
    <property type="protein sequence ID" value="EAT90033.1"/>
    <property type="molecule type" value="Genomic_DNA"/>
</dbReference>
<dbReference type="RefSeq" id="XP_001793872.1">
    <property type="nucleotide sequence ID" value="XM_001793820.1"/>
</dbReference>
<dbReference type="SMR" id="Q0UY62"/>
<dbReference type="FunCoup" id="Q0UY62">
    <property type="interactions" value="356"/>
</dbReference>
<dbReference type="STRING" id="321614.Q0UY62"/>
<dbReference type="EnsemblFungi" id="SNOT_03302">
    <property type="protein sequence ID" value="SNOT_03302"/>
    <property type="gene ID" value="SNOG_03302"/>
</dbReference>
<dbReference type="GeneID" id="5970729"/>
<dbReference type="KEGG" id="pno:SNOG_03302"/>
<dbReference type="VEuPathDB" id="FungiDB:JI435_033020"/>
<dbReference type="eggNOG" id="KOG0331">
    <property type="taxonomic scope" value="Eukaryota"/>
</dbReference>
<dbReference type="HOGENOM" id="CLU_003041_1_5_1"/>
<dbReference type="InParanoid" id="Q0UY62"/>
<dbReference type="OMA" id="KKTHDMY"/>
<dbReference type="OrthoDB" id="196131at2759"/>
<dbReference type="Proteomes" id="UP000001055">
    <property type="component" value="Unassembled WGS sequence"/>
</dbReference>
<dbReference type="GO" id="GO:0005730">
    <property type="term" value="C:nucleolus"/>
    <property type="evidence" value="ECO:0000318"/>
    <property type="project" value="GO_Central"/>
</dbReference>
<dbReference type="GO" id="GO:0030687">
    <property type="term" value="C:preribosome, large subunit precursor"/>
    <property type="evidence" value="ECO:0007669"/>
    <property type="project" value="EnsemblFungi"/>
</dbReference>
<dbReference type="GO" id="GO:0005524">
    <property type="term" value="F:ATP binding"/>
    <property type="evidence" value="ECO:0007669"/>
    <property type="project" value="UniProtKB-KW"/>
</dbReference>
<dbReference type="GO" id="GO:0016887">
    <property type="term" value="F:ATP hydrolysis activity"/>
    <property type="evidence" value="ECO:0007669"/>
    <property type="project" value="RHEA"/>
</dbReference>
<dbReference type="GO" id="GO:0003729">
    <property type="term" value="F:mRNA binding"/>
    <property type="evidence" value="ECO:0000318"/>
    <property type="project" value="GO_Central"/>
</dbReference>
<dbReference type="GO" id="GO:0003724">
    <property type="term" value="F:RNA helicase activity"/>
    <property type="evidence" value="ECO:0000318"/>
    <property type="project" value="GO_Central"/>
</dbReference>
<dbReference type="GO" id="GO:0000464">
    <property type="term" value="P:endonucleolytic cleavage in ITS1 upstream of 5.8S rRNA from tricistronic rRNA transcript (SSU-rRNA, 5.8S rRNA, LSU-rRNA)"/>
    <property type="evidence" value="ECO:0007669"/>
    <property type="project" value="EnsemblFungi"/>
</dbReference>
<dbReference type="GO" id="GO:0006364">
    <property type="term" value="P:rRNA processing"/>
    <property type="evidence" value="ECO:0000318"/>
    <property type="project" value="GO_Central"/>
</dbReference>
<dbReference type="CDD" id="cd00268">
    <property type="entry name" value="DEADc"/>
    <property type="match status" value="1"/>
</dbReference>
<dbReference type="CDD" id="cd18787">
    <property type="entry name" value="SF2_C_DEAD"/>
    <property type="match status" value="1"/>
</dbReference>
<dbReference type="FunFam" id="3.40.50.300:FF:000008">
    <property type="entry name" value="ATP-dependent RNA helicase RhlB"/>
    <property type="match status" value="1"/>
</dbReference>
<dbReference type="Gene3D" id="3.40.50.300">
    <property type="entry name" value="P-loop containing nucleotide triphosphate hydrolases"/>
    <property type="match status" value="2"/>
</dbReference>
<dbReference type="InterPro" id="IPR011545">
    <property type="entry name" value="DEAD/DEAH_box_helicase_dom"/>
</dbReference>
<dbReference type="InterPro" id="IPR014001">
    <property type="entry name" value="Helicase_ATP-bd"/>
</dbReference>
<dbReference type="InterPro" id="IPR001650">
    <property type="entry name" value="Helicase_C-like"/>
</dbReference>
<dbReference type="InterPro" id="IPR027417">
    <property type="entry name" value="P-loop_NTPase"/>
</dbReference>
<dbReference type="InterPro" id="IPR000629">
    <property type="entry name" value="RNA-helicase_DEAD-box_CS"/>
</dbReference>
<dbReference type="PANTHER" id="PTHR47958">
    <property type="entry name" value="ATP-DEPENDENT RNA HELICASE DBP3"/>
    <property type="match status" value="1"/>
</dbReference>
<dbReference type="Pfam" id="PF00270">
    <property type="entry name" value="DEAD"/>
    <property type="match status" value="1"/>
</dbReference>
<dbReference type="Pfam" id="PF00271">
    <property type="entry name" value="Helicase_C"/>
    <property type="match status" value="1"/>
</dbReference>
<dbReference type="SMART" id="SM00487">
    <property type="entry name" value="DEXDc"/>
    <property type="match status" value="1"/>
</dbReference>
<dbReference type="SMART" id="SM00490">
    <property type="entry name" value="HELICc"/>
    <property type="match status" value="1"/>
</dbReference>
<dbReference type="SUPFAM" id="SSF52540">
    <property type="entry name" value="P-loop containing nucleoside triphosphate hydrolases"/>
    <property type="match status" value="1"/>
</dbReference>
<dbReference type="PROSITE" id="PS00039">
    <property type="entry name" value="DEAD_ATP_HELICASE"/>
    <property type="match status" value="1"/>
</dbReference>
<dbReference type="PROSITE" id="PS51192">
    <property type="entry name" value="HELICASE_ATP_BIND_1"/>
    <property type="match status" value="1"/>
</dbReference>
<dbReference type="PROSITE" id="PS51194">
    <property type="entry name" value="HELICASE_CTER"/>
    <property type="match status" value="1"/>
</dbReference>
<dbReference type="PROSITE" id="PS51195">
    <property type="entry name" value="Q_MOTIF"/>
    <property type="match status" value="1"/>
</dbReference>
<comment type="function">
    <text evidence="1">ATP-dependent RNA helicase required for 60S ribosomal subunit synthesis. Involved in efficient pre-rRNA processing, predominantly at site A3, which is necessary for the normal formation of 25S and 5.8S rRNAs (By similarity).</text>
</comment>
<comment type="catalytic activity">
    <reaction>
        <text>ATP + H2O = ADP + phosphate + H(+)</text>
        <dbReference type="Rhea" id="RHEA:13065"/>
        <dbReference type="ChEBI" id="CHEBI:15377"/>
        <dbReference type="ChEBI" id="CHEBI:15378"/>
        <dbReference type="ChEBI" id="CHEBI:30616"/>
        <dbReference type="ChEBI" id="CHEBI:43474"/>
        <dbReference type="ChEBI" id="CHEBI:456216"/>
        <dbReference type="EC" id="3.6.4.13"/>
    </reaction>
</comment>
<comment type="subcellular location">
    <subcellularLocation>
        <location evidence="1">Nucleus</location>
        <location evidence="1">Nucleolus</location>
    </subcellularLocation>
</comment>
<comment type="domain">
    <text>The Q motif is unique to and characteristic of the DEAD box family of RNA helicases and controls ATP binding and hydrolysis.</text>
</comment>
<comment type="similarity">
    <text evidence="5">Belongs to the DEAD box helicase family. DDX5/DBP2 subfamily.</text>
</comment>
<accession>Q0UY62</accession>
<feature type="chain" id="PRO_0000255994" description="ATP-dependent RNA helicase DBP3">
    <location>
        <begin position="1"/>
        <end position="592"/>
    </location>
</feature>
<feature type="domain" description="Helicase ATP-binding" evidence="2">
    <location>
        <begin position="209"/>
        <end position="382"/>
    </location>
</feature>
<feature type="domain" description="Helicase C-terminal" evidence="3">
    <location>
        <begin position="413"/>
        <end position="562"/>
    </location>
</feature>
<feature type="region of interest" description="Disordered" evidence="4">
    <location>
        <begin position="1"/>
        <end position="146"/>
    </location>
</feature>
<feature type="short sequence motif" description="Q motif">
    <location>
        <begin position="179"/>
        <end position="206"/>
    </location>
</feature>
<feature type="short sequence motif" description="DEAD box">
    <location>
        <begin position="330"/>
        <end position="333"/>
    </location>
</feature>
<feature type="compositionally biased region" description="Basic residues" evidence="4">
    <location>
        <begin position="19"/>
        <end position="31"/>
    </location>
</feature>
<feature type="compositionally biased region" description="Basic and acidic residues" evidence="4">
    <location>
        <begin position="73"/>
        <end position="82"/>
    </location>
</feature>
<feature type="compositionally biased region" description="Basic residues" evidence="4">
    <location>
        <begin position="97"/>
        <end position="108"/>
    </location>
</feature>
<feature type="compositionally biased region" description="Polar residues" evidence="4">
    <location>
        <begin position="116"/>
        <end position="141"/>
    </location>
</feature>
<feature type="binding site" evidence="2">
    <location>
        <begin position="222"/>
        <end position="229"/>
    </location>
    <ligand>
        <name>ATP</name>
        <dbReference type="ChEBI" id="CHEBI:30616"/>
    </ligand>
</feature>
<sequence length="592" mass="64007">MGKRPIEDDAVASSELSRKKSKKEKSGKSKKSVIGEGADTNGHAPAAETTVDGSENEALSKAERKAAKKAKKEAKEASKAGKADAPTVENDEEAAKAARKAARKAEKKKLKEAEKTASSAPTEASSVPAQTLSSSNAGSYTEHTELAQLPQSEIDAFLTKNTMTIEDPKPAARKLRPIVNFKYLPVTDESQRAPFAGFTAPTPIQAATWPFLLSGRDMVGVAETGSGKTLAFGVPCVRAILSLPKDKRKGIKAVIVSPTRELAVQIYDQLVALAHPAGLSVVCVYGGVPKDPQVAACRKAHIVVATPGRLNDLIGDGSADLSNADYVVLDEADRMLDKGFEEPIRQIISQTPKKRQTLMFTATWPPSVRDLASTFMVSPVRITIGDNQSGELRANVRIKQLVEVLDPHAKEQRLLQLLKQYQSGKNKDDRILVFCLYKKEAMRIENFIRMKGFRVGGIHGDLSQEKRSASLAAFKEGQVPLLVATDVAARGLDIPAVKLVINVTFPLTAEDYVHRIGRTGRAGKEGLAITFFTEHDKGLSGSLINVLKAANQEVPEELLKFGTTVKKKEHGAYGAFYKDVDNTKAATKITFD</sequence>
<organism>
    <name type="scientific">Phaeosphaeria nodorum (strain SN15 / ATCC MYA-4574 / FGSC 10173)</name>
    <name type="common">Glume blotch fungus</name>
    <name type="synonym">Parastagonospora nodorum</name>
    <dbReference type="NCBI Taxonomy" id="321614"/>
    <lineage>
        <taxon>Eukaryota</taxon>
        <taxon>Fungi</taxon>
        <taxon>Dikarya</taxon>
        <taxon>Ascomycota</taxon>
        <taxon>Pezizomycotina</taxon>
        <taxon>Dothideomycetes</taxon>
        <taxon>Pleosporomycetidae</taxon>
        <taxon>Pleosporales</taxon>
        <taxon>Pleosporineae</taxon>
        <taxon>Phaeosphaeriaceae</taxon>
        <taxon>Parastagonospora</taxon>
    </lineage>
</organism>
<protein>
    <recommendedName>
        <fullName>ATP-dependent RNA helicase DBP3</fullName>
        <ecNumber>3.6.4.13</ecNumber>
    </recommendedName>
</protein>
<proteinExistence type="inferred from homology"/>